<proteinExistence type="evidence at transcript level"/>
<accession>O64788</accession>
<gene>
    <name type="ordered locus">At1g61320</name>
    <name type="ORF">T1F9.19</name>
</gene>
<dbReference type="EMBL" id="AC004255">
    <property type="protein sequence ID" value="AAC13909.1"/>
    <property type="molecule type" value="Genomic_DNA"/>
</dbReference>
<dbReference type="EMBL" id="CP002684">
    <property type="protein sequence ID" value="AEE33820.1"/>
    <property type="molecule type" value="Genomic_DNA"/>
</dbReference>
<dbReference type="EMBL" id="AY954767">
    <property type="protein sequence ID" value="AAX55093.1"/>
    <property type="molecule type" value="mRNA"/>
</dbReference>
<dbReference type="RefSeq" id="NP_176327.1">
    <property type="nucleotide sequence ID" value="NM_104813.2"/>
</dbReference>
<dbReference type="STRING" id="3702.O64788"/>
<dbReference type="iPTMnet" id="O64788"/>
<dbReference type="PaxDb" id="3702-AT1G61320.1"/>
<dbReference type="EnsemblPlants" id="AT1G61320.1">
    <property type="protein sequence ID" value="AT1G61320.1"/>
    <property type="gene ID" value="AT1G61320"/>
</dbReference>
<dbReference type="GeneID" id="842426"/>
<dbReference type="Gramene" id="AT1G61320.1">
    <property type="protein sequence ID" value="AT1G61320.1"/>
    <property type="gene ID" value="AT1G61320"/>
</dbReference>
<dbReference type="KEGG" id="ath:AT1G61320"/>
<dbReference type="Araport" id="AT1G61320"/>
<dbReference type="TAIR" id="AT1G61320"/>
<dbReference type="eggNOG" id="ENOG502RYMX">
    <property type="taxonomic scope" value="Eukaryota"/>
</dbReference>
<dbReference type="HOGENOM" id="CLU_045469_0_0_1"/>
<dbReference type="InParanoid" id="O64788"/>
<dbReference type="OMA" id="CGPYWEL"/>
<dbReference type="PhylomeDB" id="O64788"/>
<dbReference type="PRO" id="PR:O64788"/>
<dbReference type="Proteomes" id="UP000006548">
    <property type="component" value="Chromosome 1"/>
</dbReference>
<dbReference type="ExpressionAtlas" id="O64788">
    <property type="expression patterns" value="baseline and differential"/>
</dbReference>
<dbReference type="Gene3D" id="3.80.10.10">
    <property type="entry name" value="Ribonuclease Inhibitor"/>
    <property type="match status" value="1"/>
</dbReference>
<dbReference type="InterPro" id="IPR053772">
    <property type="entry name" value="At1g61320/At1g61330-like"/>
</dbReference>
<dbReference type="InterPro" id="IPR055357">
    <property type="entry name" value="LRR_At1g61320_AtMIF1"/>
</dbReference>
<dbReference type="InterPro" id="IPR032675">
    <property type="entry name" value="LRR_dom_sf"/>
</dbReference>
<dbReference type="PANTHER" id="PTHR34145:SF77">
    <property type="match status" value="1"/>
</dbReference>
<dbReference type="PANTHER" id="PTHR34145">
    <property type="entry name" value="OS02G0105600 PROTEIN"/>
    <property type="match status" value="1"/>
</dbReference>
<dbReference type="Pfam" id="PF23622">
    <property type="entry name" value="LRR_At1g61320_AtMIF1"/>
    <property type="match status" value="1"/>
</dbReference>
<dbReference type="SUPFAM" id="SSF52047">
    <property type="entry name" value="RNI-like"/>
    <property type="match status" value="1"/>
</dbReference>
<sequence>MAPPTKRTRVEMAESSNKRMKPSETVPEDVLELMMSTYLPVQSLLTTRVLSKRFRETEVRSLDLDFSGIYSRRRRKVEVVGIIEKVFNQHKGSEIHRFVLLLNHIGVEDKIISWTNTCFDKNIKELVLDFSKSRKVMAIPIDFSAVESLQVLKLRWCKFEIPDSSPKGLKLLKTLSLMRTQVMVKTIDAIFNNCIHLESLELIECRMDGILSIRAQNHKKFKSLVVSFMPDLRHIRLDAPTLENYKYDGYVICVNILITNALKEANLYYTRIRRLYHQKSDLVDTLRFYTRLTVLATTTIFLEALTKRYVGEGRLENPPFKFENLTEFKISFITPTFCTLFDIAEFLKECPKLKQVVIDIQNFTFEPQMYFWEIHHKAQIQNTSNNNYLLKCLTDVKIIGYKGHWHELDIVEFFVKNAPSLKRLELQMPKNAKNDAHTPDVARIKLIKTIFSGVKVTEV</sequence>
<feature type="chain" id="PRO_0000396020" description="FBD-associated F-box protein At1g61320">
    <location>
        <begin position="1"/>
        <end position="459"/>
    </location>
</feature>
<feature type="domain" description="F-box">
    <location>
        <begin position="21"/>
        <end position="69"/>
    </location>
</feature>
<feature type="domain" description="FBD">
    <location>
        <begin position="396"/>
        <end position="428"/>
    </location>
</feature>
<feature type="region of interest" description="Disordered" evidence="1">
    <location>
        <begin position="1"/>
        <end position="25"/>
    </location>
</feature>
<protein>
    <recommendedName>
        <fullName>FBD-associated F-box protein At1g61320</fullName>
    </recommendedName>
</protein>
<evidence type="ECO:0000256" key="1">
    <source>
        <dbReference type="SAM" id="MobiDB-lite"/>
    </source>
</evidence>
<name>FBD33_ARATH</name>
<keyword id="KW-1185">Reference proteome</keyword>
<organism>
    <name type="scientific">Arabidopsis thaliana</name>
    <name type="common">Mouse-ear cress</name>
    <dbReference type="NCBI Taxonomy" id="3702"/>
    <lineage>
        <taxon>Eukaryota</taxon>
        <taxon>Viridiplantae</taxon>
        <taxon>Streptophyta</taxon>
        <taxon>Embryophyta</taxon>
        <taxon>Tracheophyta</taxon>
        <taxon>Spermatophyta</taxon>
        <taxon>Magnoliopsida</taxon>
        <taxon>eudicotyledons</taxon>
        <taxon>Gunneridae</taxon>
        <taxon>Pentapetalae</taxon>
        <taxon>rosids</taxon>
        <taxon>malvids</taxon>
        <taxon>Brassicales</taxon>
        <taxon>Brassicaceae</taxon>
        <taxon>Camelineae</taxon>
        <taxon>Arabidopsis</taxon>
    </lineage>
</organism>
<reference key="1">
    <citation type="journal article" date="2000" name="Nature">
        <title>Sequence and analysis of chromosome 1 of the plant Arabidopsis thaliana.</title>
        <authorList>
            <person name="Theologis A."/>
            <person name="Ecker J.R."/>
            <person name="Palm C.J."/>
            <person name="Federspiel N.A."/>
            <person name="Kaul S."/>
            <person name="White O."/>
            <person name="Alonso J."/>
            <person name="Altafi H."/>
            <person name="Araujo R."/>
            <person name="Bowman C.L."/>
            <person name="Brooks S.Y."/>
            <person name="Buehler E."/>
            <person name="Chan A."/>
            <person name="Chao Q."/>
            <person name="Chen H."/>
            <person name="Cheuk R.F."/>
            <person name="Chin C.W."/>
            <person name="Chung M.K."/>
            <person name="Conn L."/>
            <person name="Conway A.B."/>
            <person name="Conway A.R."/>
            <person name="Creasy T.H."/>
            <person name="Dewar K."/>
            <person name="Dunn P."/>
            <person name="Etgu P."/>
            <person name="Feldblyum T.V."/>
            <person name="Feng J.-D."/>
            <person name="Fong B."/>
            <person name="Fujii C.Y."/>
            <person name="Gill J.E."/>
            <person name="Goldsmith A.D."/>
            <person name="Haas B."/>
            <person name="Hansen N.F."/>
            <person name="Hughes B."/>
            <person name="Huizar L."/>
            <person name="Hunter J.L."/>
            <person name="Jenkins J."/>
            <person name="Johnson-Hopson C."/>
            <person name="Khan S."/>
            <person name="Khaykin E."/>
            <person name="Kim C.J."/>
            <person name="Koo H.L."/>
            <person name="Kremenetskaia I."/>
            <person name="Kurtz D.B."/>
            <person name="Kwan A."/>
            <person name="Lam B."/>
            <person name="Langin-Hooper S."/>
            <person name="Lee A."/>
            <person name="Lee J.M."/>
            <person name="Lenz C.A."/>
            <person name="Li J.H."/>
            <person name="Li Y.-P."/>
            <person name="Lin X."/>
            <person name="Liu S.X."/>
            <person name="Liu Z.A."/>
            <person name="Luros J.S."/>
            <person name="Maiti R."/>
            <person name="Marziali A."/>
            <person name="Militscher J."/>
            <person name="Miranda M."/>
            <person name="Nguyen M."/>
            <person name="Nierman W.C."/>
            <person name="Osborne B.I."/>
            <person name="Pai G."/>
            <person name="Peterson J."/>
            <person name="Pham P.K."/>
            <person name="Rizzo M."/>
            <person name="Rooney T."/>
            <person name="Rowley D."/>
            <person name="Sakano H."/>
            <person name="Salzberg S.L."/>
            <person name="Schwartz J.R."/>
            <person name="Shinn P."/>
            <person name="Southwick A.M."/>
            <person name="Sun H."/>
            <person name="Tallon L.J."/>
            <person name="Tambunga G."/>
            <person name="Toriumi M.J."/>
            <person name="Town C.D."/>
            <person name="Utterback T."/>
            <person name="Van Aken S."/>
            <person name="Vaysberg M."/>
            <person name="Vysotskaia V.S."/>
            <person name="Walker M."/>
            <person name="Wu D."/>
            <person name="Yu G."/>
            <person name="Fraser C.M."/>
            <person name="Venter J.C."/>
            <person name="Davis R.W."/>
        </authorList>
    </citation>
    <scope>NUCLEOTIDE SEQUENCE [LARGE SCALE GENOMIC DNA]</scope>
    <source>
        <strain>cv. Columbia</strain>
    </source>
</reference>
<reference key="2">
    <citation type="journal article" date="2017" name="Plant J.">
        <title>Araport11: a complete reannotation of the Arabidopsis thaliana reference genome.</title>
        <authorList>
            <person name="Cheng C.Y."/>
            <person name="Krishnakumar V."/>
            <person name="Chan A.P."/>
            <person name="Thibaud-Nissen F."/>
            <person name="Schobel S."/>
            <person name="Town C.D."/>
        </authorList>
    </citation>
    <scope>GENOME REANNOTATION</scope>
    <source>
        <strain>cv. Columbia</strain>
    </source>
</reference>
<reference key="3">
    <citation type="submission" date="2005-03" db="EMBL/GenBank/DDBJ databases">
        <authorList>
            <person name="Underwood B.A."/>
            <person name="Xiao Y.-L."/>
            <person name="Moskal W.A. Jr."/>
            <person name="Monaghan E.L."/>
            <person name="Wang W."/>
            <person name="Redman J.C."/>
            <person name="Wu H.C."/>
            <person name="Utterback T."/>
            <person name="Town C.D."/>
        </authorList>
    </citation>
    <scope>NUCLEOTIDE SEQUENCE [LARGE SCALE MRNA]</scope>
    <source>
        <strain>cv. Columbia</strain>
    </source>
</reference>